<name>HSL6_DICDI</name>
<keyword id="KW-1185">Reference proteome</keyword>
<gene>
    <name type="primary">hssl6</name>
    <name type="ORF">DDB_G0268456</name>
</gene>
<accession>Q55FC5</accession>
<evidence type="ECO:0000256" key="1">
    <source>
        <dbReference type="SAM" id="MobiDB-lite"/>
    </source>
</evidence>
<evidence type="ECO:0000305" key="2"/>
<comment type="similarity">
    <text evidence="2">Belongs to the hssA/B family.</text>
</comment>
<sequence>MSILSALTSISNPMKSSNSNVANGGSKLSMGANSVACGSCGGGNSSSGIINNSDGSQTTYYTYTSPTYQYGYTYSYGSSFSSSSCGCN</sequence>
<reference key="1">
    <citation type="journal article" date="2005" name="Nature">
        <title>The genome of the social amoeba Dictyostelium discoideum.</title>
        <authorList>
            <person name="Eichinger L."/>
            <person name="Pachebat J.A."/>
            <person name="Gloeckner G."/>
            <person name="Rajandream M.A."/>
            <person name="Sucgang R."/>
            <person name="Berriman M."/>
            <person name="Song J."/>
            <person name="Olsen R."/>
            <person name="Szafranski K."/>
            <person name="Xu Q."/>
            <person name="Tunggal B."/>
            <person name="Kummerfeld S."/>
            <person name="Madera M."/>
            <person name="Konfortov B.A."/>
            <person name="Rivero F."/>
            <person name="Bankier A.T."/>
            <person name="Lehmann R."/>
            <person name="Hamlin N."/>
            <person name="Davies R."/>
            <person name="Gaudet P."/>
            <person name="Fey P."/>
            <person name="Pilcher K."/>
            <person name="Chen G."/>
            <person name="Saunders D."/>
            <person name="Sodergren E.J."/>
            <person name="Davis P."/>
            <person name="Kerhornou A."/>
            <person name="Nie X."/>
            <person name="Hall N."/>
            <person name="Anjard C."/>
            <person name="Hemphill L."/>
            <person name="Bason N."/>
            <person name="Farbrother P."/>
            <person name="Desany B."/>
            <person name="Just E."/>
            <person name="Morio T."/>
            <person name="Rost R."/>
            <person name="Churcher C.M."/>
            <person name="Cooper J."/>
            <person name="Haydock S."/>
            <person name="van Driessche N."/>
            <person name="Cronin A."/>
            <person name="Goodhead I."/>
            <person name="Muzny D.M."/>
            <person name="Mourier T."/>
            <person name="Pain A."/>
            <person name="Lu M."/>
            <person name="Harper D."/>
            <person name="Lindsay R."/>
            <person name="Hauser H."/>
            <person name="James K.D."/>
            <person name="Quiles M."/>
            <person name="Madan Babu M."/>
            <person name="Saito T."/>
            <person name="Buchrieser C."/>
            <person name="Wardroper A."/>
            <person name="Felder M."/>
            <person name="Thangavelu M."/>
            <person name="Johnson D."/>
            <person name="Knights A."/>
            <person name="Loulseged H."/>
            <person name="Mungall K.L."/>
            <person name="Oliver K."/>
            <person name="Price C."/>
            <person name="Quail M.A."/>
            <person name="Urushihara H."/>
            <person name="Hernandez J."/>
            <person name="Rabbinowitsch E."/>
            <person name="Steffen D."/>
            <person name="Sanders M."/>
            <person name="Ma J."/>
            <person name="Kohara Y."/>
            <person name="Sharp S."/>
            <person name="Simmonds M.N."/>
            <person name="Spiegler S."/>
            <person name="Tivey A."/>
            <person name="Sugano S."/>
            <person name="White B."/>
            <person name="Walker D."/>
            <person name="Woodward J.R."/>
            <person name="Winckler T."/>
            <person name="Tanaka Y."/>
            <person name="Shaulsky G."/>
            <person name="Schleicher M."/>
            <person name="Weinstock G.M."/>
            <person name="Rosenthal A."/>
            <person name="Cox E.C."/>
            <person name="Chisholm R.L."/>
            <person name="Gibbs R.A."/>
            <person name="Loomis W.F."/>
            <person name="Platzer M."/>
            <person name="Kay R.R."/>
            <person name="Williams J.G."/>
            <person name="Dear P.H."/>
            <person name="Noegel A.A."/>
            <person name="Barrell B.G."/>
            <person name="Kuspa A."/>
        </authorList>
    </citation>
    <scope>NUCLEOTIDE SEQUENCE [LARGE SCALE GENOMIC DNA]</scope>
    <source>
        <strain>AX4</strain>
    </source>
</reference>
<proteinExistence type="inferred from homology"/>
<dbReference type="EMBL" id="AAFI02000003">
    <property type="protein sequence ID" value="EAL73681.1"/>
    <property type="molecule type" value="Genomic_DNA"/>
</dbReference>
<dbReference type="RefSeq" id="XP_647608.1">
    <property type="nucleotide sequence ID" value="XM_642516.1"/>
</dbReference>
<dbReference type="FunCoup" id="Q55FC5">
    <property type="interactions" value="243"/>
</dbReference>
<dbReference type="PaxDb" id="44689-DDB0252793"/>
<dbReference type="EnsemblProtists" id="EAL73681">
    <property type="protein sequence ID" value="EAL73681"/>
    <property type="gene ID" value="DDB_G0268456"/>
</dbReference>
<dbReference type="GeneID" id="8616420"/>
<dbReference type="KEGG" id="ddi:DDB_G0268456"/>
<dbReference type="dictyBase" id="DDB_G0268456"/>
<dbReference type="HOGENOM" id="CLU_181850_1_0_1"/>
<dbReference type="InParanoid" id="Q55FC5"/>
<dbReference type="PRO" id="PR:Q55FC5"/>
<dbReference type="Proteomes" id="UP000002195">
    <property type="component" value="Chromosome 1"/>
</dbReference>
<dbReference type="GO" id="GO:0030587">
    <property type="term" value="P:sorocarp development"/>
    <property type="evidence" value="ECO:0000318"/>
    <property type="project" value="GO_Central"/>
</dbReference>
<dbReference type="InterPro" id="IPR050533">
    <property type="entry name" value="HssA/B-like_chaperone"/>
</dbReference>
<dbReference type="InterPro" id="IPR008455">
    <property type="entry name" value="HssA/B-related"/>
</dbReference>
<dbReference type="PANTHER" id="PTHR31059">
    <property type="entry name" value="HSSA/B-LIKE PROTEIN 1-RELATED-RELATED"/>
    <property type="match status" value="1"/>
</dbReference>
<dbReference type="PANTHER" id="PTHR31059:SF5">
    <property type="entry name" value="HSSA_B-LIKE PROTEIN 1-RELATED"/>
    <property type="match status" value="1"/>
</dbReference>
<dbReference type="Pfam" id="PF05710">
    <property type="entry name" value="Coiled"/>
    <property type="match status" value="1"/>
</dbReference>
<organism>
    <name type="scientific">Dictyostelium discoideum</name>
    <name type="common">Social amoeba</name>
    <dbReference type="NCBI Taxonomy" id="44689"/>
    <lineage>
        <taxon>Eukaryota</taxon>
        <taxon>Amoebozoa</taxon>
        <taxon>Evosea</taxon>
        <taxon>Eumycetozoa</taxon>
        <taxon>Dictyostelia</taxon>
        <taxon>Dictyosteliales</taxon>
        <taxon>Dictyosteliaceae</taxon>
        <taxon>Dictyostelium</taxon>
    </lineage>
</organism>
<protein>
    <recommendedName>
        <fullName>HssA/B-like protein 6</fullName>
    </recommendedName>
</protein>
<feature type="chain" id="PRO_0000330376" description="HssA/B-like protein 6">
    <location>
        <begin position="1"/>
        <end position="88"/>
    </location>
</feature>
<feature type="region of interest" description="Disordered" evidence="1">
    <location>
        <begin position="1"/>
        <end position="22"/>
    </location>
</feature>